<evidence type="ECO:0000250" key="1">
    <source>
        <dbReference type="UniProtKB" id="Q68G84"/>
    </source>
</evidence>
<evidence type="ECO:0000269" key="2">
    <source>
    </source>
</evidence>
<evidence type="ECO:0000269" key="3">
    <source>
    </source>
</evidence>
<evidence type="ECO:0000269" key="4">
    <source ref="5"/>
</evidence>
<evidence type="ECO:0000305" key="5"/>
<evidence type="ECO:0007744" key="6">
    <source>
        <dbReference type="PDB" id="1T6J"/>
    </source>
</evidence>
<evidence type="ECO:0007829" key="7">
    <source>
        <dbReference type="PDB" id="1T6P"/>
    </source>
</evidence>
<evidence type="ECO:0007829" key="8">
    <source>
        <dbReference type="PDB" id="1Y2M"/>
    </source>
</evidence>
<reference key="1">
    <citation type="journal article" date="1991" name="DNA Seq.">
        <title>Analysis of the gene for phenylalanine ammonia-lyase from Rhodosporidium toruloides.</title>
        <authorList>
            <person name="Rasmussen O.F."/>
            <person name="Orum H."/>
        </authorList>
    </citation>
    <scope>NUCLEOTIDE SEQUENCE [GENOMIC DNA]</scope>
    <source>
        <strain>ATCC 10788 / CBS 14 / BCRC 20306 / IAM 13469 / JCM 10020 / NBRC 0559 / NRRL Y-1091</strain>
    </source>
</reference>
<reference key="2">
    <citation type="journal article" date="1987" name="Gene">
        <title>Complete nucleotide sequence of the Rhodosporidium toruloides gene coding for phenylalanine ammonia-lyase.</title>
        <authorList>
            <person name="Anson J.G."/>
            <person name="Gilbert H.J."/>
            <person name="Oram J.D."/>
            <person name="Minton N.P."/>
        </authorList>
    </citation>
    <scope>NUCLEOTIDE SEQUENCE [GENOMIC DNA]</scope>
    <source>
        <strain>ATCC 10788 / CBS 14 / BCRC 20306 / IAM 13469 / JCM 10020 / NBRC 0559 / NRRL Y-1091</strain>
    </source>
</reference>
<reference key="3">
    <citation type="patent" date="1988-03-23" number="EP0260919">
        <title>L-phenylalanine ammonia lyase.</title>
        <authorList>
            <person name="Fukuhara N."/>
            <person name="Yoshino S."/>
            <person name="Yamamoto K."/>
            <person name="Se T."/>
            <person name="Sone S."/>
            <person name="Nakajima Y."/>
            <person name="Suzuki M."/>
            <person name="Makiguchi N."/>
        </authorList>
    </citation>
    <scope>NUCLEOTIDE SEQUENCE [MRNA]</scope>
    <source>
        <strain>ATCC 10788 / CBS 14 / BCRC 20306 / IAM 13469 / JCM 10020 / NBRC 0559 / NRRL Y-1091</strain>
    </source>
</reference>
<reference key="4">
    <citation type="journal article" date="1971" name="J. Biol. Chem.">
        <title>Yeast phenylalanine ammonia-lyase. Purification, properties, and the identification of catalytically essential dehydroalanine.</title>
        <authorList>
            <person name="Hodgins D.S."/>
        </authorList>
    </citation>
    <scope>FUNCTION</scope>
    <scope>CATALYTIC ACTIVITY</scope>
    <scope>BIOPHYSICOCHEMICAL PROPERTIES</scope>
    <source>
        <strain>ATCC 10788 / CBS 14 / BCRC 20306 / IAM 13469 / JCM 10020 / NBRC 0559 / NRRL Y-1091</strain>
    </source>
</reference>
<reference key="5">
    <citation type="journal article" date="1990" name="Agric. Biol. Chem.">
        <title>Crystallization and properties of L-phenylalanine ammonia-lyase from Rhodosporidium toruloides.</title>
        <authorList>
            <person name="Adachi O."/>
            <person name="Matsushita K."/>
            <person name="Shinagawa E."/>
            <person name="Ameyama M."/>
        </authorList>
    </citation>
    <scope>BIOPHYSICOCHEMICAL PROPERTIES</scope>
    <scope>SUBUNIT</scope>
</reference>
<reference key="6">
    <citation type="journal article" date="2004" name="Biochemistry">
        <title>Crystal structure of phenylalanine ammonia lyase: multiple helix dipoles implicated in catalysis.</title>
        <authorList>
            <person name="Calabrese J.C."/>
            <person name="Jordan D.B."/>
            <person name="Boodhoo A."/>
            <person name="Sariaslani S."/>
            <person name="Vannelli T."/>
        </authorList>
    </citation>
    <scope>X-RAY CRYSTALLOGRAPHY (2.10 ANGSTROMS) IN COMPLEX WITH TRANS-CINNAMATE</scope>
    <scope>PTM</scope>
    <scope>DEHYDRATION AT SER-212</scope>
    <scope>SUBUNIT</scope>
</reference>
<reference key="7">
    <citation type="journal article" date="2005" name="Mol. Genet. Metab.">
        <title>Structure-based chemical modification strategy for enzyme replacement treatment of phenylketonuria.</title>
        <authorList>
            <person name="Wang L."/>
            <person name="Gamez A."/>
            <person name="Sarkissian C.N."/>
            <person name="Straub M."/>
            <person name="Patch M.G."/>
            <person name="Han G.W."/>
            <person name="Striepeke S."/>
            <person name="Fitzpatrick P."/>
            <person name="Scriver C.R."/>
            <person name="Stevens R.C."/>
        </authorList>
    </citation>
    <scope>X-RAY CRYSTALLOGRAPHY (1.60 ANGSTROMS)</scope>
</reference>
<feature type="chain" id="PRO_0000215432" description="Phenylalanine/tyrosine ammonia-lyase">
    <location>
        <begin position="1"/>
        <end position="716"/>
    </location>
</feature>
<feature type="active site" description="Proton donor/acceptor" evidence="1">
    <location>
        <position position="110"/>
    </location>
</feature>
<feature type="binding site" evidence="1">
    <location>
        <position position="270"/>
    </location>
    <ligand>
        <name>(E)-cinnamate</name>
        <dbReference type="ChEBI" id="CHEBI:15669"/>
    </ligand>
</feature>
<feature type="binding site" evidence="1">
    <location>
        <position position="360"/>
    </location>
    <ligand>
        <name>(E)-cinnamate</name>
        <dbReference type="ChEBI" id="CHEBI:15669"/>
    </ligand>
</feature>
<feature type="binding site" evidence="1">
    <location>
        <position position="366"/>
    </location>
    <ligand>
        <name>(E)-cinnamate</name>
        <dbReference type="ChEBI" id="CHEBI:15669"/>
    </ligand>
</feature>
<feature type="binding site" evidence="1">
    <location>
        <position position="397"/>
    </location>
    <ligand>
        <name>(E)-cinnamate</name>
        <dbReference type="ChEBI" id="CHEBI:15669"/>
    </ligand>
</feature>
<feature type="binding site" evidence="2 6">
    <location>
        <position position="468"/>
    </location>
    <ligand>
        <name>(E)-cinnamate</name>
        <dbReference type="ChEBI" id="CHEBI:15669"/>
    </ligand>
</feature>
<feature type="binding site" evidence="2 6">
    <location>
        <position position="496"/>
    </location>
    <ligand>
        <name>(E)-cinnamate</name>
        <dbReference type="ChEBI" id="CHEBI:15669"/>
    </ligand>
</feature>
<feature type="binding site" evidence="1">
    <location>
        <position position="499"/>
    </location>
    <ligand>
        <name>(E)-cinnamate</name>
        <dbReference type="ChEBI" id="CHEBI:15669"/>
    </ligand>
</feature>
<feature type="modified residue" description="2,3-didehydroalanine (Ser)" evidence="2">
    <location>
        <position position="212"/>
    </location>
</feature>
<feature type="cross-link" description="5-imidazolinone (Ala-Gly)" evidence="2">
    <location>
        <begin position="211"/>
        <end position="213"/>
    </location>
</feature>
<feature type="sequence conflict" description="In Ref. 2; AAA33883." evidence="5" ref="2">
    <original>SLDSISHSFANGVASAKQAVNGASTNLAVAGSHL</original>
    <variation>RPTSQSQARTC</variation>
    <location>
        <begin position="4"/>
        <end position="37"/>
    </location>
</feature>
<feature type="helix" evidence="8">
    <location>
        <begin position="30"/>
        <end position="33"/>
    </location>
</feature>
<feature type="helix" evidence="8">
    <location>
        <begin position="44"/>
        <end position="52"/>
    </location>
</feature>
<feature type="strand" evidence="8">
    <location>
        <begin position="56"/>
        <end position="58"/>
    </location>
</feature>
<feature type="strand" evidence="8">
    <location>
        <begin position="60"/>
        <end position="62"/>
    </location>
</feature>
<feature type="helix" evidence="8">
    <location>
        <begin position="69"/>
        <end position="77"/>
    </location>
</feature>
<feature type="strand" evidence="8">
    <location>
        <begin position="82"/>
        <end position="84"/>
    </location>
</feature>
<feature type="helix" evidence="8">
    <location>
        <begin position="88"/>
        <end position="101"/>
    </location>
</feature>
<feature type="helix" evidence="8">
    <location>
        <begin position="103"/>
        <end position="107"/>
    </location>
</feature>
<feature type="helix" evidence="8">
    <location>
        <begin position="125"/>
        <end position="138"/>
    </location>
</feature>
<feature type="helix" evidence="8">
    <location>
        <begin position="147"/>
        <end position="149"/>
    </location>
</feature>
<feature type="helix" evidence="8">
    <location>
        <begin position="162"/>
        <end position="176"/>
    </location>
</feature>
<feature type="strand" evidence="8">
    <location>
        <begin position="179"/>
        <end position="181"/>
    </location>
</feature>
<feature type="helix" evidence="8">
    <location>
        <begin position="185"/>
        <end position="196"/>
    </location>
</feature>
<feature type="strand" evidence="8">
    <location>
        <begin position="204"/>
        <end position="206"/>
    </location>
</feature>
<feature type="helix" evidence="8">
    <location>
        <begin position="215"/>
        <end position="225"/>
    </location>
</feature>
<feature type="strand" evidence="8">
    <location>
        <begin position="232"/>
        <end position="237"/>
    </location>
</feature>
<feature type="strand" evidence="8">
    <location>
        <begin position="240"/>
        <end position="245"/>
    </location>
</feature>
<feature type="helix" evidence="8">
    <location>
        <begin position="246"/>
        <end position="252"/>
    </location>
</feature>
<feature type="helix" evidence="8">
    <location>
        <begin position="264"/>
        <end position="269"/>
    </location>
</feature>
<feature type="strand" evidence="8">
    <location>
        <begin position="270"/>
        <end position="272"/>
    </location>
</feature>
<feature type="helix" evidence="8">
    <location>
        <begin position="273"/>
        <end position="303"/>
    </location>
</feature>
<feature type="helix" evidence="8">
    <location>
        <begin position="308"/>
        <end position="311"/>
    </location>
</feature>
<feature type="helix" evidence="8">
    <location>
        <begin position="313"/>
        <end position="315"/>
    </location>
</feature>
<feature type="turn" evidence="8">
    <location>
        <begin position="316"/>
        <end position="319"/>
    </location>
</feature>
<feature type="helix" evidence="8">
    <location>
        <begin position="323"/>
        <end position="336"/>
    </location>
</feature>
<feature type="strand" evidence="8">
    <location>
        <begin position="340"/>
        <end position="343"/>
    </location>
</feature>
<feature type="helix" evidence="8">
    <location>
        <begin position="345"/>
        <end position="348"/>
    </location>
</feature>
<feature type="helix" evidence="8">
    <location>
        <begin position="363"/>
        <end position="366"/>
    </location>
</feature>
<feature type="helix" evidence="8">
    <location>
        <begin position="368"/>
        <end position="391"/>
    </location>
</feature>
<feature type="strand" evidence="8">
    <location>
        <begin position="396"/>
        <end position="401"/>
    </location>
</feature>
<feature type="turn" evidence="8">
    <location>
        <begin position="402"/>
        <end position="405"/>
    </location>
</feature>
<feature type="strand" evidence="8">
    <location>
        <begin position="406"/>
        <end position="408"/>
    </location>
</feature>
<feature type="helix" evidence="8">
    <location>
        <begin position="416"/>
        <end position="443"/>
    </location>
</feature>
<feature type="turn" evidence="8">
    <location>
        <begin position="446"/>
        <end position="448"/>
    </location>
</feature>
<feature type="helix" evidence="8">
    <location>
        <begin position="454"/>
        <end position="456"/>
    </location>
</feature>
<feature type="helix" evidence="8">
    <location>
        <begin position="461"/>
        <end position="463"/>
    </location>
</feature>
<feature type="helix" evidence="8">
    <location>
        <begin position="468"/>
        <end position="484"/>
    </location>
</feature>
<feature type="helix" evidence="8">
    <location>
        <begin position="489"/>
        <end position="491"/>
    </location>
</feature>
<feature type="turn" evidence="8">
    <location>
        <begin position="496"/>
        <end position="499"/>
    </location>
</feature>
<feature type="strand" evidence="8">
    <location>
        <begin position="500"/>
        <end position="502"/>
    </location>
</feature>
<feature type="helix" evidence="8">
    <location>
        <begin position="506"/>
        <end position="560"/>
    </location>
</feature>
<feature type="turn" evidence="8">
    <location>
        <begin position="561"/>
        <end position="566"/>
    </location>
</feature>
<feature type="helix" evidence="8">
    <location>
        <begin position="569"/>
        <end position="585"/>
    </location>
</feature>
<feature type="helix" evidence="8">
    <location>
        <begin position="593"/>
        <end position="611"/>
    </location>
</feature>
<feature type="turn" evidence="8">
    <location>
        <begin position="612"/>
        <end position="614"/>
    </location>
</feature>
<feature type="helix" evidence="8">
    <location>
        <begin position="619"/>
        <end position="646"/>
    </location>
</feature>
<feature type="helix" evidence="8">
    <location>
        <begin position="649"/>
        <end position="651"/>
    </location>
</feature>
<feature type="helix" evidence="8">
    <location>
        <begin position="653"/>
        <end position="656"/>
    </location>
</feature>
<feature type="helix" evidence="8">
    <location>
        <begin position="662"/>
        <end position="670"/>
    </location>
</feature>
<feature type="turn" evidence="7">
    <location>
        <begin position="671"/>
        <end position="673"/>
    </location>
</feature>
<feature type="helix" evidence="8">
    <location>
        <begin position="681"/>
        <end position="684"/>
    </location>
</feature>
<feature type="helix" evidence="8">
    <location>
        <begin position="691"/>
        <end position="703"/>
    </location>
</feature>
<feature type="turn" evidence="7">
    <location>
        <begin position="704"/>
        <end position="707"/>
    </location>
</feature>
<feature type="helix" evidence="8">
    <location>
        <begin position="708"/>
        <end position="714"/>
    </location>
</feature>
<protein>
    <recommendedName>
        <fullName>Phenylalanine/tyrosine ammonia-lyase</fullName>
        <ecNumber evidence="3">4.3.1.25</ecNumber>
    </recommendedName>
    <alternativeName>
        <fullName>Bifunctional phenylalanine ammonia-lyase</fullName>
        <shortName>Bifunctional PAL</shortName>
    </alternativeName>
</protein>
<keyword id="KW-0002">3D-structure</keyword>
<keyword id="KW-0963">Cytoplasm</keyword>
<keyword id="KW-0456">Lyase</keyword>
<keyword id="KW-0585">Phenylalanine catabolism</keyword>
<keyword id="KW-0587">Phenylpropanoid metabolism</keyword>
<accession>P11544</accession>
<name>PALY_RHOTO</name>
<gene>
    <name type="primary">PAL</name>
</gene>
<proteinExistence type="evidence at protein level"/>
<dbReference type="EC" id="4.3.1.25" evidence="3"/>
<dbReference type="EMBL" id="X51513">
    <property type="protein sequence ID" value="CAA35886.1"/>
    <property type="molecule type" value="Genomic_DNA"/>
</dbReference>
<dbReference type="EMBL" id="M18261">
    <property type="protein sequence ID" value="AAA33883.1"/>
    <property type="molecule type" value="Genomic_DNA"/>
</dbReference>
<dbReference type="EMBL" id="X12702">
    <property type="protein sequence ID" value="CAA31209.1"/>
    <property type="molecule type" value="mRNA"/>
</dbReference>
<dbReference type="PIR" id="A29607">
    <property type="entry name" value="A29607"/>
</dbReference>
<dbReference type="PIR" id="A56628">
    <property type="entry name" value="A56628"/>
</dbReference>
<dbReference type="PDB" id="1T6J">
    <property type="method" value="X-ray"/>
    <property type="resolution" value="2.10 A"/>
    <property type="chains" value="A/B=1-716"/>
</dbReference>
<dbReference type="PDB" id="1T6P">
    <property type="method" value="X-ray"/>
    <property type="resolution" value="2.70 A"/>
    <property type="chains" value="A/B/C/D/E/F/G/H=1-716"/>
</dbReference>
<dbReference type="PDB" id="1Y2M">
    <property type="method" value="X-ray"/>
    <property type="resolution" value="1.60 A"/>
    <property type="chains" value="A/B/C/D=1-716"/>
</dbReference>
<dbReference type="PDBsum" id="1T6J"/>
<dbReference type="PDBsum" id="1T6P"/>
<dbReference type="PDBsum" id="1Y2M"/>
<dbReference type="SMR" id="P11544"/>
<dbReference type="OrthoDB" id="10051290at2759"/>
<dbReference type="BRENDA" id="4.3.1.24">
    <property type="organism ID" value="5424"/>
</dbReference>
<dbReference type="BRENDA" id="4.3.1.25">
    <property type="organism ID" value="5424"/>
</dbReference>
<dbReference type="UniPathway" id="UPA00713">
    <property type="reaction ID" value="UER00725"/>
</dbReference>
<dbReference type="EvolutionaryTrace" id="P11544"/>
<dbReference type="GO" id="GO:0005737">
    <property type="term" value="C:cytoplasm"/>
    <property type="evidence" value="ECO:0007669"/>
    <property type="project" value="UniProtKB-SubCell"/>
</dbReference>
<dbReference type="GO" id="GO:0045548">
    <property type="term" value="F:phenylalanine ammonia-lyase activity"/>
    <property type="evidence" value="ECO:0007669"/>
    <property type="project" value="RHEA"/>
</dbReference>
<dbReference type="GO" id="GO:0052883">
    <property type="term" value="F:tyrosine ammonia-lyase activity"/>
    <property type="evidence" value="ECO:0007669"/>
    <property type="project" value="RHEA"/>
</dbReference>
<dbReference type="GO" id="GO:0009800">
    <property type="term" value="P:cinnamic acid biosynthetic process"/>
    <property type="evidence" value="ECO:0007669"/>
    <property type="project" value="UniProtKB-UniPathway"/>
</dbReference>
<dbReference type="GO" id="GO:0006559">
    <property type="term" value="P:L-phenylalanine catabolic process"/>
    <property type="evidence" value="ECO:0007669"/>
    <property type="project" value="UniProtKB-KW"/>
</dbReference>
<dbReference type="CDD" id="cd00332">
    <property type="entry name" value="PAL-HAL"/>
    <property type="match status" value="1"/>
</dbReference>
<dbReference type="Gene3D" id="1.20.200.10">
    <property type="entry name" value="Fumarase/aspartase (Central domain)"/>
    <property type="match status" value="1"/>
</dbReference>
<dbReference type="Gene3D" id="1.10.275.10">
    <property type="entry name" value="Fumarase/aspartase (N-terminal domain)"/>
    <property type="match status" value="1"/>
</dbReference>
<dbReference type="Gene3D" id="1.10.274.20">
    <property type="entry name" value="Phenylalanine ammonia-lyase 1, domain 3"/>
    <property type="match status" value="1"/>
</dbReference>
<dbReference type="InterPro" id="IPR001106">
    <property type="entry name" value="Aromatic_Lyase"/>
</dbReference>
<dbReference type="InterPro" id="IPR024083">
    <property type="entry name" value="Fumarase/histidase_N"/>
</dbReference>
<dbReference type="InterPro" id="IPR008948">
    <property type="entry name" value="L-Aspartase-like"/>
</dbReference>
<dbReference type="InterPro" id="IPR022313">
    <property type="entry name" value="Phe/His_NH3-lyase_AS"/>
</dbReference>
<dbReference type="InterPro" id="IPR005922">
    <property type="entry name" value="Phe_NH3-lyase"/>
</dbReference>
<dbReference type="InterPro" id="IPR023144">
    <property type="entry name" value="Phe_NH3-lyase_shielding_dom_sf"/>
</dbReference>
<dbReference type="NCBIfam" id="TIGR01226">
    <property type="entry name" value="phe_am_lyase"/>
    <property type="match status" value="1"/>
</dbReference>
<dbReference type="PANTHER" id="PTHR10362">
    <property type="entry name" value="HISTIDINE AMMONIA-LYASE"/>
    <property type="match status" value="1"/>
</dbReference>
<dbReference type="Pfam" id="PF00221">
    <property type="entry name" value="Lyase_aromatic"/>
    <property type="match status" value="1"/>
</dbReference>
<dbReference type="SUPFAM" id="SSF48557">
    <property type="entry name" value="L-aspartase-like"/>
    <property type="match status" value="1"/>
</dbReference>
<dbReference type="PROSITE" id="PS00488">
    <property type="entry name" value="PAL_HISTIDASE"/>
    <property type="match status" value="1"/>
</dbReference>
<sequence length="716" mass="76880">MAPSLDSISHSFANGVASAKQAVNGASTNLAVAGSHLPTTQVTQVDIVEKMLAAPTDSTLELDGYSLNLGDVVSAARKGRPVRVKDSDEIRSKIDKSVEFLRSQLSMSVYGVTTGFGGSADTRTEDAISLQKALLEHQLCGVLPSSFDSFRLGRGLENSLPLEVVRGAMTIRVNSLTRGHSAVRLVVLEALTNFLNHGITPIVPLRGTISASGDLSPLSYIAAAISGHPDSKVHVVHEGKEKILYAREAMALFNLEPVVLGPKEGLGLVNGTAVSASMATLALHDAHMLSLLSQSLTAMTVEAMVGHAGSFHPFLHDVTRPHPTQIEVAGNIRKLLEGSRFAVHHEEEVKVKDDEGILRQDRYPLRTSPQWLGPLVSDLIHAHAVLTIEAGQSTTDNPLIDVENKTSHHGGNFQAAAVANTMEKTRLGLAQIGKLNFTQLTEMLNAGMNRGLPSCLAAEDPSLSYHCKGLDIAAAAYTSELGHLANPVTTHVQPAEMANQAVNSLALISARRTTESNDVLSLLLATHLYCVLQAIDLRAIEFEFKKQFGPAIVSLIDQHFGSAMTGSNLRDELVEKVNKTLAKRLEQTNSYDLVPRWHDAFSFAAGTVVEVLSSTSLSLAAVNAWKVAAAESAISLTRQVRETFWSAASTSSPALSYLSPRTQILYAFVREELGVKARRGDVFLGKQEVTIGSNVSKIYEAIKSGRINNVLLKMLA</sequence>
<organism>
    <name type="scientific">Rhodotorula toruloides</name>
    <name type="common">Yeast</name>
    <name type="synonym">Rhodosporidium toruloides</name>
    <dbReference type="NCBI Taxonomy" id="5286"/>
    <lineage>
        <taxon>Eukaryota</taxon>
        <taxon>Fungi</taxon>
        <taxon>Dikarya</taxon>
        <taxon>Basidiomycota</taxon>
        <taxon>Pucciniomycotina</taxon>
        <taxon>Microbotryomycetes</taxon>
        <taxon>Sporidiobolales</taxon>
        <taxon>Sporidiobolaceae</taxon>
        <taxon>Rhodotorula</taxon>
    </lineage>
</organism>
<comment type="function">
    <text evidence="3">Catalyzes the non-oxidative deamination of L-phenylalanine and L-tyrosine to form trans-cinnamic acid and p-coumaric acid respectively with similar efficiencies. Facilitates the commitment step in phenylpropanoid pathways that produce secondary metabolites such as lignins, coumarins and flavonoids.</text>
</comment>
<comment type="catalytic activity">
    <reaction evidence="3">
        <text>L-phenylalanine = (E)-cinnamate + NH4(+)</text>
        <dbReference type="Rhea" id="RHEA:21384"/>
        <dbReference type="ChEBI" id="CHEBI:15669"/>
        <dbReference type="ChEBI" id="CHEBI:28938"/>
        <dbReference type="ChEBI" id="CHEBI:58095"/>
        <dbReference type="EC" id="4.3.1.25"/>
    </reaction>
</comment>
<comment type="catalytic activity">
    <reaction evidence="3">
        <text>L-tyrosine = (E)-4-coumarate + NH4(+)</text>
        <dbReference type="Rhea" id="RHEA:24906"/>
        <dbReference type="ChEBI" id="CHEBI:12876"/>
        <dbReference type="ChEBI" id="CHEBI:28938"/>
        <dbReference type="ChEBI" id="CHEBI:58315"/>
        <dbReference type="EC" id="4.3.1.25"/>
    </reaction>
</comment>
<comment type="biophysicochemical properties">
    <kinetics>
        <KM evidence="3 4">0.29 mM for L-phenylalanine</KM>
        <KM evidence="3 4">0.18 mM for L-tyrosine</KM>
    </kinetics>
    <phDependence>
        <text evidence="3 4">Optimum pH is 8.5.</text>
    </phDependence>
</comment>
<comment type="pathway">
    <text evidence="5">Phenylpropanoid metabolism; trans-cinnamate biosynthesis; trans-cinnamate from L-phenylalanine: step 1/1.</text>
</comment>
<comment type="subunit">
    <text evidence="2 4">Homotetramer. Dimer of dimers.</text>
</comment>
<comment type="subcellular location">
    <subcellularLocation>
        <location evidence="5">Cytoplasm</location>
    </subcellularLocation>
</comment>
<comment type="PTM">
    <text evidence="2">Contains an active site 4-methylidene-imidazol-5-one (MIO), which is formed autocatalytically by cyclization and dehydration of residues Ala-Ser-Gly.</text>
</comment>
<comment type="similarity">
    <text evidence="5">Belongs to the PAL/histidase family.</text>
</comment>